<reference key="1">
    <citation type="journal article" date="2007" name="Proc. Natl. Acad. Sci. U.S.A.">
        <title>The genome of Syntrophus aciditrophicus: life at the thermodynamic limit of microbial growth.</title>
        <authorList>
            <person name="McInerney M.J."/>
            <person name="Rohlin L."/>
            <person name="Mouttaki H."/>
            <person name="Kim U."/>
            <person name="Krupp R.S."/>
            <person name="Rios-Hernandez L."/>
            <person name="Sieber J."/>
            <person name="Struchtemeyer C.G."/>
            <person name="Bhattacharyya A."/>
            <person name="Campbell J.W."/>
            <person name="Gunsalus R.P."/>
        </authorList>
    </citation>
    <scope>NUCLEOTIDE SEQUENCE [LARGE SCALE GENOMIC DNA]</scope>
    <source>
        <strain>SB</strain>
    </source>
</reference>
<gene>
    <name evidence="1" type="primary">pheS</name>
    <name type="ordered locus">SYNAS_06560</name>
    <name type="ORF">SYN_01721</name>
</gene>
<protein>
    <recommendedName>
        <fullName evidence="1">Phenylalanine--tRNA ligase alpha subunit</fullName>
        <ecNumber evidence="1">6.1.1.20</ecNumber>
    </recommendedName>
    <alternativeName>
        <fullName evidence="1">Phenylalanyl-tRNA synthetase alpha subunit</fullName>
        <shortName evidence="1">PheRS</shortName>
    </alternativeName>
</protein>
<dbReference type="EC" id="6.1.1.20" evidence="1"/>
<dbReference type="EMBL" id="CP000252">
    <property type="protein sequence ID" value="ABC76535.1"/>
    <property type="molecule type" value="Genomic_DNA"/>
</dbReference>
<dbReference type="RefSeq" id="WP_011416569.1">
    <property type="nucleotide sequence ID" value="NC_007759.1"/>
</dbReference>
<dbReference type="SMR" id="Q2LR28"/>
<dbReference type="FunCoup" id="Q2LR28">
    <property type="interactions" value="476"/>
</dbReference>
<dbReference type="STRING" id="56780.SYN_01721"/>
<dbReference type="KEGG" id="sat:SYN_01721"/>
<dbReference type="eggNOG" id="COG0016">
    <property type="taxonomic scope" value="Bacteria"/>
</dbReference>
<dbReference type="HOGENOM" id="CLU_025086_0_1_7"/>
<dbReference type="InParanoid" id="Q2LR28"/>
<dbReference type="OrthoDB" id="9800719at2"/>
<dbReference type="Proteomes" id="UP000001933">
    <property type="component" value="Chromosome"/>
</dbReference>
<dbReference type="GO" id="GO:0005737">
    <property type="term" value="C:cytoplasm"/>
    <property type="evidence" value="ECO:0007669"/>
    <property type="project" value="UniProtKB-SubCell"/>
</dbReference>
<dbReference type="GO" id="GO:0005524">
    <property type="term" value="F:ATP binding"/>
    <property type="evidence" value="ECO:0007669"/>
    <property type="project" value="UniProtKB-UniRule"/>
</dbReference>
<dbReference type="GO" id="GO:0000287">
    <property type="term" value="F:magnesium ion binding"/>
    <property type="evidence" value="ECO:0007669"/>
    <property type="project" value="UniProtKB-UniRule"/>
</dbReference>
<dbReference type="GO" id="GO:0004826">
    <property type="term" value="F:phenylalanine-tRNA ligase activity"/>
    <property type="evidence" value="ECO:0007669"/>
    <property type="project" value="UniProtKB-UniRule"/>
</dbReference>
<dbReference type="GO" id="GO:0000049">
    <property type="term" value="F:tRNA binding"/>
    <property type="evidence" value="ECO:0007669"/>
    <property type="project" value="InterPro"/>
</dbReference>
<dbReference type="GO" id="GO:0006432">
    <property type="term" value="P:phenylalanyl-tRNA aminoacylation"/>
    <property type="evidence" value="ECO:0007669"/>
    <property type="project" value="UniProtKB-UniRule"/>
</dbReference>
<dbReference type="CDD" id="cd00496">
    <property type="entry name" value="PheRS_alpha_core"/>
    <property type="match status" value="1"/>
</dbReference>
<dbReference type="FunFam" id="3.30.930.10:FF:000003">
    <property type="entry name" value="Phenylalanine--tRNA ligase alpha subunit"/>
    <property type="match status" value="1"/>
</dbReference>
<dbReference type="Gene3D" id="3.30.930.10">
    <property type="entry name" value="Bira Bifunctional Protein, Domain 2"/>
    <property type="match status" value="1"/>
</dbReference>
<dbReference type="HAMAP" id="MF_00281">
    <property type="entry name" value="Phe_tRNA_synth_alpha1"/>
    <property type="match status" value="1"/>
</dbReference>
<dbReference type="InterPro" id="IPR006195">
    <property type="entry name" value="aa-tRNA-synth_II"/>
</dbReference>
<dbReference type="InterPro" id="IPR045864">
    <property type="entry name" value="aa-tRNA-synth_II/BPL/LPL"/>
</dbReference>
<dbReference type="InterPro" id="IPR004529">
    <property type="entry name" value="Phe-tRNA-synth_IIc_asu"/>
</dbReference>
<dbReference type="InterPro" id="IPR004188">
    <property type="entry name" value="Phe-tRNA_ligase_II_N"/>
</dbReference>
<dbReference type="InterPro" id="IPR022911">
    <property type="entry name" value="Phe_tRNA_ligase_alpha1_bac"/>
</dbReference>
<dbReference type="InterPro" id="IPR002319">
    <property type="entry name" value="Phenylalanyl-tRNA_Synthase"/>
</dbReference>
<dbReference type="InterPro" id="IPR010978">
    <property type="entry name" value="tRNA-bd_arm"/>
</dbReference>
<dbReference type="NCBIfam" id="TIGR00468">
    <property type="entry name" value="pheS"/>
    <property type="match status" value="1"/>
</dbReference>
<dbReference type="PANTHER" id="PTHR11538:SF41">
    <property type="entry name" value="PHENYLALANINE--TRNA LIGASE, MITOCHONDRIAL"/>
    <property type="match status" value="1"/>
</dbReference>
<dbReference type="PANTHER" id="PTHR11538">
    <property type="entry name" value="PHENYLALANYL-TRNA SYNTHETASE"/>
    <property type="match status" value="1"/>
</dbReference>
<dbReference type="Pfam" id="PF02912">
    <property type="entry name" value="Phe_tRNA-synt_N"/>
    <property type="match status" value="1"/>
</dbReference>
<dbReference type="Pfam" id="PF01409">
    <property type="entry name" value="tRNA-synt_2d"/>
    <property type="match status" value="1"/>
</dbReference>
<dbReference type="SUPFAM" id="SSF55681">
    <property type="entry name" value="Class II aaRS and biotin synthetases"/>
    <property type="match status" value="1"/>
</dbReference>
<dbReference type="SUPFAM" id="SSF46589">
    <property type="entry name" value="tRNA-binding arm"/>
    <property type="match status" value="1"/>
</dbReference>
<dbReference type="PROSITE" id="PS50862">
    <property type="entry name" value="AA_TRNA_LIGASE_II"/>
    <property type="match status" value="1"/>
</dbReference>
<keyword id="KW-0030">Aminoacyl-tRNA synthetase</keyword>
<keyword id="KW-0067">ATP-binding</keyword>
<keyword id="KW-0963">Cytoplasm</keyword>
<keyword id="KW-0436">Ligase</keyword>
<keyword id="KW-0460">Magnesium</keyword>
<keyword id="KW-0479">Metal-binding</keyword>
<keyword id="KW-0547">Nucleotide-binding</keyword>
<keyword id="KW-0648">Protein biosynthesis</keyword>
<keyword id="KW-1185">Reference proteome</keyword>
<sequence>MIEDLKELQNKAEAEIKAAKTETDLAAVRVRYLGRKGLLTQFLRNLGQLSIEEKQIFGKRANEIKTILSSRFDEAQTVIAALKKESVLRAEALDVTLPGRSSGYGRAHPVTQVLEEICAIFSEIGFSIAEGPEIESDYYNFEALNIPKDHPARDMQDTFYVEEAIVLRTHTSPVQIRTMEKQSPPVKIISPGRVYRPDSDVSHTPMFHQVEGLLVDRGITFGDLKGLLNAFLKQIFGEETVLRFRPSYFPFTEPSAEVDIRCVICRGKGCRVCGQSGWLEILGSGMVDPAVFENVGYDPEEYSGFAFGLGVERIAMLKYGITDIRLFFENERRFLQQF</sequence>
<name>SYFA_SYNAS</name>
<feature type="chain" id="PRO_1000006911" description="Phenylalanine--tRNA ligase alpha subunit">
    <location>
        <begin position="1"/>
        <end position="338"/>
    </location>
</feature>
<feature type="binding site" evidence="1">
    <location>
        <position position="253"/>
    </location>
    <ligand>
        <name>Mg(2+)</name>
        <dbReference type="ChEBI" id="CHEBI:18420"/>
        <note>shared with beta subunit</note>
    </ligand>
</feature>
<accession>Q2LR28</accession>
<organism>
    <name type="scientific">Syntrophus aciditrophicus (strain SB)</name>
    <dbReference type="NCBI Taxonomy" id="56780"/>
    <lineage>
        <taxon>Bacteria</taxon>
        <taxon>Pseudomonadati</taxon>
        <taxon>Thermodesulfobacteriota</taxon>
        <taxon>Syntrophia</taxon>
        <taxon>Syntrophales</taxon>
        <taxon>Syntrophaceae</taxon>
        <taxon>Syntrophus</taxon>
    </lineage>
</organism>
<proteinExistence type="inferred from homology"/>
<evidence type="ECO:0000255" key="1">
    <source>
        <dbReference type="HAMAP-Rule" id="MF_00281"/>
    </source>
</evidence>
<comment type="catalytic activity">
    <reaction evidence="1">
        <text>tRNA(Phe) + L-phenylalanine + ATP = L-phenylalanyl-tRNA(Phe) + AMP + diphosphate + H(+)</text>
        <dbReference type="Rhea" id="RHEA:19413"/>
        <dbReference type="Rhea" id="RHEA-COMP:9668"/>
        <dbReference type="Rhea" id="RHEA-COMP:9699"/>
        <dbReference type="ChEBI" id="CHEBI:15378"/>
        <dbReference type="ChEBI" id="CHEBI:30616"/>
        <dbReference type="ChEBI" id="CHEBI:33019"/>
        <dbReference type="ChEBI" id="CHEBI:58095"/>
        <dbReference type="ChEBI" id="CHEBI:78442"/>
        <dbReference type="ChEBI" id="CHEBI:78531"/>
        <dbReference type="ChEBI" id="CHEBI:456215"/>
        <dbReference type="EC" id="6.1.1.20"/>
    </reaction>
</comment>
<comment type="cofactor">
    <cofactor evidence="1">
        <name>Mg(2+)</name>
        <dbReference type="ChEBI" id="CHEBI:18420"/>
    </cofactor>
    <text evidence="1">Binds 2 magnesium ions per tetramer.</text>
</comment>
<comment type="subunit">
    <text evidence="1">Tetramer of two alpha and two beta subunits.</text>
</comment>
<comment type="subcellular location">
    <subcellularLocation>
        <location evidence="1">Cytoplasm</location>
    </subcellularLocation>
</comment>
<comment type="similarity">
    <text evidence="1">Belongs to the class-II aminoacyl-tRNA synthetase family. Phe-tRNA synthetase alpha subunit type 1 subfamily.</text>
</comment>